<name>PSD_ECO57</name>
<gene>
    <name evidence="1" type="primary">psd</name>
    <name type="ordered locus">Z5766</name>
    <name type="ordered locus">ECs5139</name>
</gene>
<evidence type="ECO:0000255" key="1">
    <source>
        <dbReference type="HAMAP-Rule" id="MF_00662"/>
    </source>
</evidence>
<evidence type="ECO:0000256" key="2">
    <source>
        <dbReference type="SAM" id="MobiDB-lite"/>
    </source>
</evidence>
<sequence length="322" mass="35934">MLNSFKLSLQYILPKLWLTRLAGWGASKRAGWLTKLVIDLFVKYYKVDMKEAQKPDTASYRTFNEFFVRPLRDEVRPIDTDPNVLVMPADGVISQLGKIEEDKILQAKGHNYSLEALLAGNYLMADLFRNGTFVTTYLSPRDYHRVHMPCNGILREMIYVPGDLFSVNHLTAQNVPNLFARNERVICLFDTEFGPMAQILVGATIVGSIETVWAGTITPPREGIIKRWTWPAGENDGSVALLKGQEMGRFKLGSTVINLFAPGKVNLVEQLESLSVTKIGQPLAVSTETFVTPDAEPAPLPAEEIEAEHDASPLVDDKKDQV</sequence>
<feature type="chain" id="PRO_0000029649" description="Phosphatidylserine decarboxylase beta chain" evidence="1">
    <location>
        <begin position="1"/>
        <end position="253"/>
    </location>
</feature>
<feature type="chain" id="PRO_0000029650" description="Phosphatidylserine decarboxylase alpha chain" evidence="1">
    <location>
        <begin position="254"/>
        <end position="322"/>
    </location>
</feature>
<feature type="region of interest" description="Disordered" evidence="2">
    <location>
        <begin position="293"/>
        <end position="322"/>
    </location>
</feature>
<feature type="compositionally biased region" description="Basic and acidic residues" evidence="2">
    <location>
        <begin position="308"/>
        <end position="322"/>
    </location>
</feature>
<feature type="active site" description="Charge relay system; for autoendoproteolytic cleavage activity" evidence="1">
    <location>
        <position position="90"/>
    </location>
</feature>
<feature type="active site" description="Charge relay system; for autoendoproteolytic cleavage activity" evidence="1">
    <location>
        <position position="147"/>
    </location>
</feature>
<feature type="active site" description="Charge relay system; for autoendoproteolytic cleavage activity" evidence="1">
    <location>
        <position position="254"/>
    </location>
</feature>
<feature type="active site" description="Schiff-base intermediate with substrate; via pyruvic acid; for decarboxylase activity" evidence="1">
    <location>
        <position position="254"/>
    </location>
</feature>
<feature type="site" description="Cleavage (non-hydrolytic); by autocatalysis" evidence="1">
    <location>
        <begin position="253"/>
        <end position="254"/>
    </location>
</feature>
<feature type="modified residue" description="Pyruvic acid (Ser); by autocatalysis" evidence="1">
    <location>
        <position position="254"/>
    </location>
</feature>
<reference key="1">
    <citation type="journal article" date="2001" name="Nature">
        <title>Genome sequence of enterohaemorrhagic Escherichia coli O157:H7.</title>
        <authorList>
            <person name="Perna N.T."/>
            <person name="Plunkett G. III"/>
            <person name="Burland V."/>
            <person name="Mau B."/>
            <person name="Glasner J.D."/>
            <person name="Rose D.J."/>
            <person name="Mayhew G.F."/>
            <person name="Evans P.S."/>
            <person name="Gregor J."/>
            <person name="Kirkpatrick H.A."/>
            <person name="Posfai G."/>
            <person name="Hackett J."/>
            <person name="Klink S."/>
            <person name="Boutin A."/>
            <person name="Shao Y."/>
            <person name="Miller L."/>
            <person name="Grotbeck E.J."/>
            <person name="Davis N.W."/>
            <person name="Lim A."/>
            <person name="Dimalanta E.T."/>
            <person name="Potamousis K."/>
            <person name="Apodaca J."/>
            <person name="Anantharaman T.S."/>
            <person name="Lin J."/>
            <person name="Yen G."/>
            <person name="Schwartz D.C."/>
            <person name="Welch R.A."/>
            <person name="Blattner F.R."/>
        </authorList>
    </citation>
    <scope>NUCLEOTIDE SEQUENCE [LARGE SCALE GENOMIC DNA]</scope>
    <source>
        <strain>O157:H7 / EDL933 / ATCC 700927 / EHEC</strain>
    </source>
</reference>
<reference key="2">
    <citation type="journal article" date="2001" name="DNA Res.">
        <title>Complete genome sequence of enterohemorrhagic Escherichia coli O157:H7 and genomic comparison with a laboratory strain K-12.</title>
        <authorList>
            <person name="Hayashi T."/>
            <person name="Makino K."/>
            <person name="Ohnishi M."/>
            <person name="Kurokawa K."/>
            <person name="Ishii K."/>
            <person name="Yokoyama K."/>
            <person name="Han C.-G."/>
            <person name="Ohtsubo E."/>
            <person name="Nakayama K."/>
            <person name="Murata T."/>
            <person name="Tanaka M."/>
            <person name="Tobe T."/>
            <person name="Iida T."/>
            <person name="Takami H."/>
            <person name="Honda T."/>
            <person name="Sasakawa C."/>
            <person name="Ogasawara N."/>
            <person name="Yasunaga T."/>
            <person name="Kuhara S."/>
            <person name="Shiba T."/>
            <person name="Hattori M."/>
            <person name="Shinagawa H."/>
        </authorList>
    </citation>
    <scope>NUCLEOTIDE SEQUENCE [LARGE SCALE GENOMIC DNA]</scope>
    <source>
        <strain>O157:H7 / Sakai / RIMD 0509952 / EHEC</strain>
    </source>
</reference>
<dbReference type="EC" id="4.1.1.65" evidence="1"/>
<dbReference type="EMBL" id="AE005174">
    <property type="protein sequence ID" value="AAG59359.1"/>
    <property type="molecule type" value="Genomic_DNA"/>
</dbReference>
<dbReference type="EMBL" id="BA000007">
    <property type="protein sequence ID" value="BAB38562.1"/>
    <property type="molecule type" value="Genomic_DNA"/>
</dbReference>
<dbReference type="PIR" id="C86112">
    <property type="entry name" value="C86112"/>
</dbReference>
<dbReference type="PIR" id="C91271">
    <property type="entry name" value="C91271"/>
</dbReference>
<dbReference type="RefSeq" id="NP_313166.1">
    <property type="nucleotide sequence ID" value="NC_002695.1"/>
</dbReference>
<dbReference type="SMR" id="P0A8K3"/>
<dbReference type="STRING" id="155864.Z5766"/>
<dbReference type="GeneID" id="915779"/>
<dbReference type="KEGG" id="ece:Z5766"/>
<dbReference type="KEGG" id="ecs:ECs_5139"/>
<dbReference type="PATRIC" id="fig|386585.9.peg.5372"/>
<dbReference type="eggNOG" id="COG0688">
    <property type="taxonomic scope" value="Bacteria"/>
</dbReference>
<dbReference type="HOGENOM" id="CLU_029061_4_1_6"/>
<dbReference type="OMA" id="KDYHHYH"/>
<dbReference type="UniPathway" id="UPA00558">
    <property type="reaction ID" value="UER00616"/>
</dbReference>
<dbReference type="Proteomes" id="UP000000558">
    <property type="component" value="Chromosome"/>
</dbReference>
<dbReference type="Proteomes" id="UP000002519">
    <property type="component" value="Chromosome"/>
</dbReference>
<dbReference type="GO" id="GO:0005886">
    <property type="term" value="C:plasma membrane"/>
    <property type="evidence" value="ECO:0007669"/>
    <property type="project" value="UniProtKB-SubCell"/>
</dbReference>
<dbReference type="GO" id="GO:0004609">
    <property type="term" value="F:phosphatidylserine decarboxylase activity"/>
    <property type="evidence" value="ECO:0007669"/>
    <property type="project" value="UniProtKB-UniRule"/>
</dbReference>
<dbReference type="GO" id="GO:0006646">
    <property type="term" value="P:phosphatidylethanolamine biosynthetic process"/>
    <property type="evidence" value="ECO:0007669"/>
    <property type="project" value="UniProtKB-UniRule"/>
</dbReference>
<dbReference type="HAMAP" id="MF_00662">
    <property type="entry name" value="PS_decarb_PSD_B_type1"/>
    <property type="match status" value="1"/>
</dbReference>
<dbReference type="InterPro" id="IPR003817">
    <property type="entry name" value="PS_Dcarbxylase"/>
</dbReference>
<dbReference type="InterPro" id="IPR033177">
    <property type="entry name" value="PSD-B"/>
</dbReference>
<dbReference type="InterPro" id="IPR033178">
    <property type="entry name" value="PSD_type1_pro"/>
</dbReference>
<dbReference type="NCBIfam" id="TIGR00163">
    <property type="entry name" value="PS_decarb"/>
    <property type="match status" value="1"/>
</dbReference>
<dbReference type="PANTHER" id="PTHR10067">
    <property type="entry name" value="PHOSPHATIDYLSERINE DECARBOXYLASE"/>
    <property type="match status" value="1"/>
</dbReference>
<dbReference type="PANTHER" id="PTHR10067:SF6">
    <property type="entry name" value="PHOSPHATIDYLSERINE DECARBOXYLASE PROENZYME, MITOCHONDRIAL"/>
    <property type="match status" value="1"/>
</dbReference>
<dbReference type="Pfam" id="PF02666">
    <property type="entry name" value="PS_Dcarbxylase"/>
    <property type="match status" value="1"/>
</dbReference>
<accession>P0A8K3</accession>
<accession>P10740</accession>
<proteinExistence type="inferred from homology"/>
<keyword id="KW-1003">Cell membrane</keyword>
<keyword id="KW-0210">Decarboxylase</keyword>
<keyword id="KW-0444">Lipid biosynthesis</keyword>
<keyword id="KW-0443">Lipid metabolism</keyword>
<keyword id="KW-0456">Lyase</keyword>
<keyword id="KW-0472">Membrane</keyword>
<keyword id="KW-0594">Phospholipid biosynthesis</keyword>
<keyword id="KW-1208">Phospholipid metabolism</keyword>
<keyword id="KW-0670">Pyruvate</keyword>
<keyword id="KW-1185">Reference proteome</keyword>
<keyword id="KW-0865">Zymogen</keyword>
<comment type="function">
    <text evidence="1">Catalyzes the formation of phosphatidylethanolamine (PtdEtn) from phosphatidylserine (PtdSer).</text>
</comment>
<comment type="catalytic activity">
    <reaction evidence="1">
        <text>a 1,2-diacyl-sn-glycero-3-phospho-L-serine + H(+) = a 1,2-diacyl-sn-glycero-3-phosphoethanolamine + CO2</text>
        <dbReference type="Rhea" id="RHEA:20828"/>
        <dbReference type="ChEBI" id="CHEBI:15378"/>
        <dbReference type="ChEBI" id="CHEBI:16526"/>
        <dbReference type="ChEBI" id="CHEBI:57262"/>
        <dbReference type="ChEBI" id="CHEBI:64612"/>
        <dbReference type="EC" id="4.1.1.65"/>
    </reaction>
</comment>
<comment type="cofactor">
    <cofactor evidence="1">
        <name>pyruvate</name>
        <dbReference type="ChEBI" id="CHEBI:15361"/>
    </cofactor>
    <text evidence="1">Binds 1 pyruvoyl group covalently per subunit.</text>
</comment>
<comment type="pathway">
    <text evidence="1">Phospholipid metabolism; phosphatidylethanolamine biosynthesis; phosphatidylethanolamine from CDP-diacylglycerol: step 2/2.</text>
</comment>
<comment type="subunit">
    <text evidence="1">Heterodimer of a large membrane-associated beta subunit and a small pyruvoyl-containing alpha subunit.</text>
</comment>
<comment type="subcellular location">
    <subcellularLocation>
        <location evidence="1">Cell membrane</location>
        <topology evidence="1">Peripheral membrane protein</topology>
    </subcellularLocation>
</comment>
<comment type="PTM">
    <text evidence="1">Is synthesized initially as an inactive proenzyme. Formation of the active enzyme involves a self-maturation process in which the active site pyruvoyl group is generated from an internal serine residue via an autocatalytic post-translational modification. Two non-identical subunits are generated from the proenzyme in this reaction, and the pyruvate is formed at the N-terminus of the alpha chain, which is derived from the carboxyl end of the proenzyme. The autoendoproteolytic cleavage occurs by a canonical serine protease mechanism, in which the side chain hydroxyl group of the serine supplies its oxygen atom to form the C-terminus of the beta chain, while the remainder of the serine residue undergoes an oxidative deamination to produce ammonia and the pyruvoyl prosthetic group on the alpha chain. During this reaction, the Ser that is part of the protease active site of the proenzyme becomes the pyruvoyl prosthetic group, which constitutes an essential element of the active site of the mature decarboxylase.</text>
</comment>
<comment type="similarity">
    <text evidence="1">Belongs to the phosphatidylserine decarboxylase family. PSD-B subfamily. Prokaryotic type I sub-subfamily.</text>
</comment>
<protein>
    <recommendedName>
        <fullName evidence="1">Phosphatidylserine decarboxylase proenzyme</fullName>
        <ecNumber evidence="1">4.1.1.65</ecNumber>
    </recommendedName>
    <component>
        <recommendedName>
            <fullName evidence="1">Phosphatidylserine decarboxylase alpha chain</fullName>
        </recommendedName>
    </component>
    <component>
        <recommendedName>
            <fullName evidence="1">Phosphatidylserine decarboxylase beta chain</fullName>
        </recommendedName>
    </component>
</protein>
<organism>
    <name type="scientific">Escherichia coli O157:H7</name>
    <dbReference type="NCBI Taxonomy" id="83334"/>
    <lineage>
        <taxon>Bacteria</taxon>
        <taxon>Pseudomonadati</taxon>
        <taxon>Pseudomonadota</taxon>
        <taxon>Gammaproteobacteria</taxon>
        <taxon>Enterobacterales</taxon>
        <taxon>Enterobacteriaceae</taxon>
        <taxon>Escherichia</taxon>
    </lineage>
</organism>